<comment type="catalytic activity">
    <reaction evidence="1">
        <text>an N-acyl-L-aspartate + H2O = a carboxylate + L-aspartate</text>
        <dbReference type="Rhea" id="RHEA:10872"/>
        <dbReference type="ChEBI" id="CHEBI:15377"/>
        <dbReference type="ChEBI" id="CHEBI:29067"/>
        <dbReference type="ChEBI" id="CHEBI:29991"/>
        <dbReference type="ChEBI" id="CHEBI:58497"/>
        <dbReference type="EC" id="3.5.1.15"/>
    </reaction>
</comment>
<comment type="cofactor">
    <cofactor evidence="1">
        <name>Zn(2+)</name>
        <dbReference type="ChEBI" id="CHEBI:29105"/>
    </cofactor>
    <text evidence="1">Binds 1 zinc ion per subunit.</text>
</comment>
<comment type="similarity">
    <text evidence="1">Belongs to the AspA/AstE family. Aspartoacylase subfamily.</text>
</comment>
<sequence length="301" mass="34681">MTVKRILIVSGTHGNEINPIWAVKQFNREENKFKNGIEYEYIIGNPIAYEKGCRYIDADLNRSFKASKNYDQHKNSFYETNRANFLVDEFGIDGSKPCQIAIDLHTTTANMGTSIVLYGRRLKDFCLAALLQNKFGLPIYLHEKDEAQTGFLVEAWPCGLVIEIGAVAQNFYDPKIIDRFSLIISSLREEIDKLKNNLIELPKELVVHVHQGSIDYPRDEKGDIDGLIHPERINQDWKMIKKGDPLFLDSQGIIHKYDGDQLIWPVFIGEVAYREKKIAMSYTKKEVIFSKEKWVQEFASL</sequence>
<name>ASPA_PROM2</name>
<evidence type="ECO:0000255" key="1">
    <source>
        <dbReference type="HAMAP-Rule" id="MF_00704"/>
    </source>
</evidence>
<accession>A8G2N0</accession>
<keyword id="KW-0378">Hydrolase</keyword>
<keyword id="KW-0479">Metal-binding</keyword>
<keyword id="KW-0862">Zinc</keyword>
<organism>
    <name type="scientific">Prochlorococcus marinus (strain MIT 9215)</name>
    <dbReference type="NCBI Taxonomy" id="93060"/>
    <lineage>
        <taxon>Bacteria</taxon>
        <taxon>Bacillati</taxon>
        <taxon>Cyanobacteriota</taxon>
        <taxon>Cyanophyceae</taxon>
        <taxon>Synechococcales</taxon>
        <taxon>Prochlorococcaceae</taxon>
        <taxon>Prochlorococcus</taxon>
    </lineage>
</organism>
<reference key="1">
    <citation type="journal article" date="2007" name="PLoS Genet.">
        <title>Patterns and implications of gene gain and loss in the evolution of Prochlorococcus.</title>
        <authorList>
            <person name="Kettler G.C."/>
            <person name="Martiny A.C."/>
            <person name="Huang K."/>
            <person name="Zucker J."/>
            <person name="Coleman M.L."/>
            <person name="Rodrigue S."/>
            <person name="Chen F."/>
            <person name="Lapidus A."/>
            <person name="Ferriera S."/>
            <person name="Johnson J."/>
            <person name="Steglich C."/>
            <person name="Church G.M."/>
            <person name="Richardson P."/>
            <person name="Chisholm S.W."/>
        </authorList>
    </citation>
    <scope>NUCLEOTIDE SEQUENCE [LARGE SCALE GENOMIC DNA]</scope>
    <source>
        <strain>MIT 9215</strain>
    </source>
</reference>
<protein>
    <recommendedName>
        <fullName evidence="1">Probable aspartoacylase</fullName>
        <ecNumber evidence="1">3.5.1.15</ecNumber>
    </recommendedName>
</protein>
<gene>
    <name type="ordered locus">P9215_02421</name>
</gene>
<proteinExistence type="inferred from homology"/>
<feature type="chain" id="PRO_1000147939" description="Probable aspartoacylase">
    <location>
        <begin position="1"/>
        <end position="301"/>
    </location>
</feature>
<feature type="binding site" evidence="1">
    <location>
        <position position="13"/>
    </location>
    <ligand>
        <name>Zn(2+)</name>
        <dbReference type="ChEBI" id="CHEBI:29105"/>
    </ligand>
</feature>
<feature type="binding site" evidence="1">
    <location>
        <position position="16"/>
    </location>
    <ligand>
        <name>Zn(2+)</name>
        <dbReference type="ChEBI" id="CHEBI:29105"/>
    </ligand>
</feature>
<feature type="binding site" evidence="1">
    <location>
        <position position="54"/>
    </location>
    <ligand>
        <name>substrate</name>
    </ligand>
</feature>
<feature type="binding site" evidence="1">
    <location>
        <begin position="61"/>
        <end position="62"/>
    </location>
    <ligand>
        <name>substrate</name>
    </ligand>
</feature>
<feature type="binding site" evidence="1">
    <location>
        <position position="105"/>
    </location>
    <ligand>
        <name>Zn(2+)</name>
        <dbReference type="ChEBI" id="CHEBI:29105"/>
    </ligand>
</feature>
<feature type="binding site" evidence="1">
    <location>
        <position position="163"/>
    </location>
    <ligand>
        <name>substrate</name>
    </ligand>
</feature>
<feature type="binding site" evidence="1">
    <location>
        <position position="273"/>
    </location>
    <ligand>
        <name>substrate</name>
    </ligand>
</feature>
<dbReference type="EC" id="3.5.1.15" evidence="1"/>
<dbReference type="EMBL" id="CP000825">
    <property type="protein sequence ID" value="ABV49861.1"/>
    <property type="molecule type" value="Genomic_DNA"/>
</dbReference>
<dbReference type="RefSeq" id="WP_012007025.1">
    <property type="nucleotide sequence ID" value="NC_009840.1"/>
</dbReference>
<dbReference type="SMR" id="A8G2N0"/>
<dbReference type="STRING" id="93060.P9215_02421"/>
<dbReference type="KEGG" id="pmh:P9215_02421"/>
<dbReference type="eggNOG" id="COG2988">
    <property type="taxonomic scope" value="Bacteria"/>
</dbReference>
<dbReference type="HOGENOM" id="CLU_083292_0_0_3"/>
<dbReference type="OrthoDB" id="531770at2"/>
<dbReference type="Proteomes" id="UP000002014">
    <property type="component" value="Chromosome"/>
</dbReference>
<dbReference type="GO" id="GO:0005829">
    <property type="term" value="C:cytosol"/>
    <property type="evidence" value="ECO:0007669"/>
    <property type="project" value="TreeGrafter"/>
</dbReference>
<dbReference type="GO" id="GO:0019807">
    <property type="term" value="F:aspartoacylase activity"/>
    <property type="evidence" value="ECO:0007669"/>
    <property type="project" value="UniProtKB-UniRule"/>
</dbReference>
<dbReference type="GO" id="GO:0016788">
    <property type="term" value="F:hydrolase activity, acting on ester bonds"/>
    <property type="evidence" value="ECO:0007669"/>
    <property type="project" value="InterPro"/>
</dbReference>
<dbReference type="GO" id="GO:0008270">
    <property type="term" value="F:zinc ion binding"/>
    <property type="evidence" value="ECO:0007669"/>
    <property type="project" value="UniProtKB-UniRule"/>
</dbReference>
<dbReference type="Gene3D" id="2.20.25.160">
    <property type="match status" value="1"/>
</dbReference>
<dbReference type="Gene3D" id="3.40.630.10">
    <property type="entry name" value="Zn peptidases"/>
    <property type="match status" value="1"/>
</dbReference>
<dbReference type="HAMAP" id="MF_00704">
    <property type="entry name" value="Aspartoacylase"/>
    <property type="match status" value="1"/>
</dbReference>
<dbReference type="InterPro" id="IPR050178">
    <property type="entry name" value="AspA/AstE_fam"/>
</dbReference>
<dbReference type="InterPro" id="IPR016708">
    <property type="entry name" value="Aspartoacylase"/>
</dbReference>
<dbReference type="InterPro" id="IPR055438">
    <property type="entry name" value="AstE_AspA_cat"/>
</dbReference>
<dbReference type="InterPro" id="IPR007036">
    <property type="entry name" value="Aste_AspA_hybrid_dom"/>
</dbReference>
<dbReference type="NCBIfam" id="NF002601">
    <property type="entry name" value="PRK02259.1"/>
    <property type="match status" value="1"/>
</dbReference>
<dbReference type="PANTHER" id="PTHR15162">
    <property type="entry name" value="ASPARTOACYLASE"/>
    <property type="match status" value="1"/>
</dbReference>
<dbReference type="PANTHER" id="PTHR15162:SF7">
    <property type="entry name" value="SUCCINYLGLUTAMATE DESUCCINYLASE"/>
    <property type="match status" value="1"/>
</dbReference>
<dbReference type="Pfam" id="PF24827">
    <property type="entry name" value="AstE_AspA_cat"/>
    <property type="match status" value="1"/>
</dbReference>
<dbReference type="Pfam" id="PF04952">
    <property type="entry name" value="AstE_AspA_hybrid"/>
    <property type="match status" value="1"/>
</dbReference>
<dbReference type="PIRSF" id="PIRSF018001">
    <property type="entry name" value="Aspartoacylase"/>
    <property type="match status" value="1"/>
</dbReference>
<dbReference type="SUPFAM" id="SSF53187">
    <property type="entry name" value="Zn-dependent exopeptidases"/>
    <property type="match status" value="1"/>
</dbReference>